<proteinExistence type="evidence at transcript level"/>
<name>Y4498_ARATH</name>
<accession>Q1PEB4</accession>
<accession>F4JGK8</accession>
<accession>Q9S9T9</accession>
<gene>
    <name type="ordered locus">At4g04980</name>
    <name type="ORF">C17L7.1</name>
    <name type="ORF">T32N4.10</name>
</gene>
<protein>
    <recommendedName>
        <fullName>Uncharacterized protein At4g04980</fullName>
    </recommendedName>
</protein>
<comment type="sequence caution" evidence="3">
    <conflict type="erroneous gene model prediction">
        <sequence resource="EMBL-CDS" id="AAD48982"/>
    </conflict>
</comment>
<comment type="sequence caution" evidence="3">
    <conflict type="erroneous gene model prediction">
        <sequence resource="EMBL-CDS" id="AEE82453"/>
    </conflict>
</comment>
<comment type="sequence caution" evidence="3">
    <conflict type="erroneous gene model prediction">
        <sequence resource="EMBL-CDS" id="CAB81040"/>
    </conflict>
</comment>
<organism>
    <name type="scientific">Arabidopsis thaliana</name>
    <name type="common">Mouse-ear cress</name>
    <dbReference type="NCBI Taxonomy" id="3702"/>
    <lineage>
        <taxon>Eukaryota</taxon>
        <taxon>Viridiplantae</taxon>
        <taxon>Streptophyta</taxon>
        <taxon>Embryophyta</taxon>
        <taxon>Tracheophyta</taxon>
        <taxon>Spermatophyta</taxon>
        <taxon>Magnoliopsida</taxon>
        <taxon>eudicotyledons</taxon>
        <taxon>Gunneridae</taxon>
        <taxon>Pentapetalae</taxon>
        <taxon>rosids</taxon>
        <taxon>malvids</taxon>
        <taxon>Brassicales</taxon>
        <taxon>Brassicaceae</taxon>
        <taxon>Camelineae</taxon>
        <taxon>Arabidopsis</taxon>
    </lineage>
</organism>
<feature type="chain" id="PRO_0000414585" description="Uncharacterized protein At4g04980">
    <location>
        <begin position="1"/>
        <end position="724"/>
    </location>
</feature>
<feature type="region of interest" description="Disordered" evidence="2">
    <location>
        <begin position="97"/>
        <end position="131"/>
    </location>
</feature>
<feature type="region of interest" description="Disordered" evidence="2">
    <location>
        <begin position="187"/>
        <end position="252"/>
    </location>
</feature>
<feature type="region of interest" description="Disordered" evidence="2">
    <location>
        <begin position="309"/>
        <end position="434"/>
    </location>
</feature>
<feature type="region of interest" description="Disordered" evidence="2">
    <location>
        <begin position="454"/>
        <end position="473"/>
    </location>
</feature>
<feature type="coiled-coil region" evidence="1">
    <location>
        <begin position="187"/>
        <end position="217"/>
    </location>
</feature>
<feature type="coiled-coil region" evidence="1">
    <location>
        <begin position="495"/>
        <end position="522"/>
    </location>
</feature>
<feature type="coiled-coil region" evidence="1">
    <location>
        <begin position="649"/>
        <end position="678"/>
    </location>
</feature>
<feature type="compositionally biased region" description="Polar residues" evidence="2">
    <location>
        <begin position="115"/>
        <end position="128"/>
    </location>
</feature>
<feature type="compositionally biased region" description="Acidic residues" evidence="2">
    <location>
        <begin position="193"/>
        <end position="212"/>
    </location>
</feature>
<feature type="compositionally biased region" description="Basic and acidic residues" evidence="2">
    <location>
        <begin position="223"/>
        <end position="252"/>
    </location>
</feature>
<feature type="compositionally biased region" description="Basic and acidic residues" evidence="2">
    <location>
        <begin position="309"/>
        <end position="322"/>
    </location>
</feature>
<feature type="compositionally biased region" description="Low complexity" evidence="2">
    <location>
        <begin position="323"/>
        <end position="333"/>
    </location>
</feature>
<feature type="compositionally biased region" description="Low complexity" evidence="2">
    <location>
        <begin position="347"/>
        <end position="366"/>
    </location>
</feature>
<feature type="compositionally biased region" description="Pro residues" evidence="2">
    <location>
        <begin position="367"/>
        <end position="388"/>
    </location>
</feature>
<feature type="compositionally biased region" description="Polar residues" evidence="2">
    <location>
        <begin position="400"/>
        <end position="410"/>
    </location>
</feature>
<keyword id="KW-0175">Coiled coil</keyword>
<keyword id="KW-1185">Reference proteome</keyword>
<evidence type="ECO:0000255" key="1"/>
<evidence type="ECO:0000256" key="2">
    <source>
        <dbReference type="SAM" id="MobiDB-lite"/>
    </source>
</evidence>
<evidence type="ECO:0000305" key="3"/>
<sequence length="724" mass="82137">MKDLQKLSPEIVTINQSFEMEGADMDKMLIFFYEDLRAIGDSWIMDSDWIYRSKYKNSGVGKNKSDRLVEHVLAALDGLIKTTRERFGMMDLESEGRKSFTTPKGVSSEARRSFTRSASYSESNNSFYPSPLTPRSVLPGTMMMSSNSTSPSLWNLRAQALDRLSPVDLKRFAMQILSQRDSESVSETKIGIEEENEESEILAEEKEEEDNDFSVLETEGTEQEIKTEHHRESSGTEHETEAKDHSEGFETEHHRIECFETEHEIDADDHIEDFETEHHHIEGLETEHEIDANDHIEDFETEHHHIEGFETEHENETEDHSETTTSETDSTESSPKEDVPPPPPLTSPQTPSPTVSTFNTKSSLRSQPPPPPPSPEHKAPAPPPPPPMSKASESGEFCQFSKTHSTNGDNAPSMPAPPAPPGSGRSLKKATSKLRRSAQIANLYWALKGKLEGRGVEGKTKKASKGQNSVAEKSPVKVARSGMADALAEMTKRSSYFQQIEEDVQKYAKSIEELKSSIHSFQTKDMKELLEFHSKVESILEKLTDETQVLARFEGFPEKKLEVIRTAGALYKKLDGILVELKNWKIEPPLNDLLDKIERYFNKFKGEIETVERTKDEDAKMFKRYNINIDFEVLVQVKETMVDVSSNCMELALKERREANEEAKNGEESKMKEERAKRLWRAFQFAFKVYTFAGGHDERADCLTRQLAHEIQTDPDQSESSIMS</sequence>
<reference key="1">
    <citation type="journal article" date="1999" name="Nature">
        <title>Sequence and analysis of chromosome 4 of the plant Arabidopsis thaliana.</title>
        <authorList>
            <person name="Mayer K.F.X."/>
            <person name="Schueller C."/>
            <person name="Wambutt R."/>
            <person name="Murphy G."/>
            <person name="Volckaert G."/>
            <person name="Pohl T."/>
            <person name="Duesterhoeft A."/>
            <person name="Stiekema W."/>
            <person name="Entian K.-D."/>
            <person name="Terryn N."/>
            <person name="Harris B."/>
            <person name="Ansorge W."/>
            <person name="Brandt P."/>
            <person name="Grivell L.A."/>
            <person name="Rieger M."/>
            <person name="Weichselgartner M."/>
            <person name="de Simone V."/>
            <person name="Obermaier B."/>
            <person name="Mache R."/>
            <person name="Mueller M."/>
            <person name="Kreis M."/>
            <person name="Delseny M."/>
            <person name="Puigdomenech P."/>
            <person name="Watson M."/>
            <person name="Schmidtheini T."/>
            <person name="Reichert B."/>
            <person name="Portetelle D."/>
            <person name="Perez-Alonso M."/>
            <person name="Boutry M."/>
            <person name="Bancroft I."/>
            <person name="Vos P."/>
            <person name="Hoheisel J."/>
            <person name="Zimmermann W."/>
            <person name="Wedler H."/>
            <person name="Ridley P."/>
            <person name="Langham S.-A."/>
            <person name="McCullagh B."/>
            <person name="Bilham L."/>
            <person name="Robben J."/>
            <person name="van der Schueren J."/>
            <person name="Grymonprez B."/>
            <person name="Chuang Y.-J."/>
            <person name="Vandenbussche F."/>
            <person name="Braeken M."/>
            <person name="Weltjens I."/>
            <person name="Voet M."/>
            <person name="Bastiaens I."/>
            <person name="Aert R."/>
            <person name="Defoor E."/>
            <person name="Weitzenegger T."/>
            <person name="Bothe G."/>
            <person name="Ramsperger U."/>
            <person name="Hilbert H."/>
            <person name="Braun M."/>
            <person name="Holzer E."/>
            <person name="Brandt A."/>
            <person name="Peters S."/>
            <person name="van Staveren M."/>
            <person name="Dirkse W."/>
            <person name="Mooijman P."/>
            <person name="Klein Lankhorst R."/>
            <person name="Rose M."/>
            <person name="Hauf J."/>
            <person name="Koetter P."/>
            <person name="Berneiser S."/>
            <person name="Hempel S."/>
            <person name="Feldpausch M."/>
            <person name="Lamberth S."/>
            <person name="Van den Daele H."/>
            <person name="De Keyser A."/>
            <person name="Buysshaert C."/>
            <person name="Gielen J."/>
            <person name="Villarroel R."/>
            <person name="De Clercq R."/>
            <person name="van Montagu M."/>
            <person name="Rogers J."/>
            <person name="Cronin A."/>
            <person name="Quail M.A."/>
            <person name="Bray-Allen S."/>
            <person name="Clark L."/>
            <person name="Doggett J."/>
            <person name="Hall S."/>
            <person name="Kay M."/>
            <person name="Lennard N."/>
            <person name="McLay K."/>
            <person name="Mayes R."/>
            <person name="Pettett A."/>
            <person name="Rajandream M.A."/>
            <person name="Lyne M."/>
            <person name="Benes V."/>
            <person name="Rechmann S."/>
            <person name="Borkova D."/>
            <person name="Bloecker H."/>
            <person name="Scharfe M."/>
            <person name="Grimm M."/>
            <person name="Loehnert T.-H."/>
            <person name="Dose S."/>
            <person name="de Haan M."/>
            <person name="Maarse A.C."/>
            <person name="Schaefer M."/>
            <person name="Mueller-Auer S."/>
            <person name="Gabel C."/>
            <person name="Fuchs M."/>
            <person name="Fartmann B."/>
            <person name="Granderath K."/>
            <person name="Dauner D."/>
            <person name="Herzl A."/>
            <person name="Neumann S."/>
            <person name="Argiriou A."/>
            <person name="Vitale D."/>
            <person name="Liguori R."/>
            <person name="Piravandi E."/>
            <person name="Massenet O."/>
            <person name="Quigley F."/>
            <person name="Clabauld G."/>
            <person name="Muendlein A."/>
            <person name="Felber R."/>
            <person name="Schnabl S."/>
            <person name="Hiller R."/>
            <person name="Schmidt W."/>
            <person name="Lecharny A."/>
            <person name="Aubourg S."/>
            <person name="Chefdor F."/>
            <person name="Cooke R."/>
            <person name="Berger C."/>
            <person name="Monfort A."/>
            <person name="Casacuberta E."/>
            <person name="Gibbons T."/>
            <person name="Weber N."/>
            <person name="Vandenbol M."/>
            <person name="Bargues M."/>
            <person name="Terol J."/>
            <person name="Torres A."/>
            <person name="Perez-Perez A."/>
            <person name="Purnelle B."/>
            <person name="Bent E."/>
            <person name="Johnson S."/>
            <person name="Tacon D."/>
            <person name="Jesse T."/>
            <person name="Heijnen L."/>
            <person name="Schwarz S."/>
            <person name="Scholler P."/>
            <person name="Heber S."/>
            <person name="Francs P."/>
            <person name="Bielke C."/>
            <person name="Frishman D."/>
            <person name="Haase D."/>
            <person name="Lemcke K."/>
            <person name="Mewes H.-W."/>
            <person name="Stocker S."/>
            <person name="Zaccaria P."/>
            <person name="Bevan M."/>
            <person name="Wilson R.K."/>
            <person name="de la Bastide M."/>
            <person name="Habermann K."/>
            <person name="Parnell L."/>
            <person name="Dedhia N."/>
            <person name="Gnoj L."/>
            <person name="Schutz K."/>
            <person name="Huang E."/>
            <person name="Spiegel L."/>
            <person name="Sekhon M."/>
            <person name="Murray J."/>
            <person name="Sheet P."/>
            <person name="Cordes M."/>
            <person name="Abu-Threideh J."/>
            <person name="Stoneking T."/>
            <person name="Kalicki J."/>
            <person name="Graves T."/>
            <person name="Harmon G."/>
            <person name="Edwards J."/>
            <person name="Latreille P."/>
            <person name="Courtney L."/>
            <person name="Cloud J."/>
            <person name="Abbott A."/>
            <person name="Scott K."/>
            <person name="Johnson D."/>
            <person name="Minx P."/>
            <person name="Bentley D."/>
            <person name="Fulton B."/>
            <person name="Miller N."/>
            <person name="Greco T."/>
            <person name="Kemp K."/>
            <person name="Kramer J."/>
            <person name="Fulton L."/>
            <person name="Mardis E."/>
            <person name="Dante M."/>
            <person name="Pepin K."/>
            <person name="Hillier L.W."/>
            <person name="Nelson J."/>
            <person name="Spieth J."/>
            <person name="Ryan E."/>
            <person name="Andrews S."/>
            <person name="Geisel C."/>
            <person name="Layman D."/>
            <person name="Du H."/>
            <person name="Ali J."/>
            <person name="Berghoff A."/>
            <person name="Jones K."/>
            <person name="Drone K."/>
            <person name="Cotton M."/>
            <person name="Joshu C."/>
            <person name="Antonoiu B."/>
            <person name="Zidanic M."/>
            <person name="Strong C."/>
            <person name="Sun H."/>
            <person name="Lamar B."/>
            <person name="Yordan C."/>
            <person name="Ma P."/>
            <person name="Zhong J."/>
            <person name="Preston R."/>
            <person name="Vil D."/>
            <person name="Shekher M."/>
            <person name="Matero A."/>
            <person name="Shah R."/>
            <person name="Swaby I.K."/>
            <person name="O'Shaughnessy A."/>
            <person name="Rodriguez M."/>
            <person name="Hoffman J."/>
            <person name="Till S."/>
            <person name="Granat S."/>
            <person name="Shohdy N."/>
            <person name="Hasegawa A."/>
            <person name="Hameed A."/>
            <person name="Lodhi M."/>
            <person name="Johnson A."/>
            <person name="Chen E."/>
            <person name="Marra M.A."/>
            <person name="Martienssen R."/>
            <person name="McCombie W.R."/>
        </authorList>
    </citation>
    <scope>NUCLEOTIDE SEQUENCE [LARGE SCALE GENOMIC DNA]</scope>
    <source>
        <strain>cv. Columbia</strain>
    </source>
</reference>
<reference key="2">
    <citation type="journal article" date="2017" name="Plant J.">
        <title>Araport11: a complete reannotation of the Arabidopsis thaliana reference genome.</title>
        <authorList>
            <person name="Cheng C.Y."/>
            <person name="Krishnakumar V."/>
            <person name="Chan A.P."/>
            <person name="Thibaud-Nissen F."/>
            <person name="Schobel S."/>
            <person name="Town C.D."/>
        </authorList>
    </citation>
    <scope>GENOME REANNOTATION</scope>
    <source>
        <strain>cv. Columbia</strain>
    </source>
</reference>
<reference key="3">
    <citation type="journal article" date="2006" name="Plant Biotechnol. J.">
        <title>Simultaneous high-throughput recombinational cloning of open reading frames in closed and open configurations.</title>
        <authorList>
            <person name="Underwood B.A."/>
            <person name="Vanderhaeghen R."/>
            <person name="Whitford R."/>
            <person name="Town C.D."/>
            <person name="Hilson P."/>
        </authorList>
    </citation>
    <scope>NUCLEOTIDE SEQUENCE [LARGE SCALE MRNA]</scope>
    <source>
        <strain>cv. Columbia</strain>
    </source>
</reference>
<dbReference type="EMBL" id="AF162444">
    <property type="protein sequence ID" value="AAD48982.1"/>
    <property type="status" value="ALT_SEQ"/>
    <property type="molecule type" value="Genomic_DNA"/>
</dbReference>
<dbReference type="EMBL" id="AL161502">
    <property type="protein sequence ID" value="CAB81040.1"/>
    <property type="status" value="ALT_SEQ"/>
    <property type="molecule type" value="Genomic_DNA"/>
</dbReference>
<dbReference type="EMBL" id="CP002687">
    <property type="protein sequence ID" value="AEE82453.1"/>
    <property type="status" value="ALT_SEQ"/>
    <property type="molecule type" value="Genomic_DNA"/>
</dbReference>
<dbReference type="EMBL" id="CP002687">
    <property type="protein sequence ID" value="ANM66992.1"/>
    <property type="molecule type" value="Genomic_DNA"/>
</dbReference>
<dbReference type="EMBL" id="DQ446804">
    <property type="protein sequence ID" value="ABE66046.1"/>
    <property type="molecule type" value="mRNA"/>
</dbReference>
<dbReference type="PIR" id="F85062">
    <property type="entry name" value="F85062"/>
</dbReference>
<dbReference type="RefSeq" id="NP_001328850.1">
    <property type="nucleotide sequence ID" value="NM_001340524.1"/>
</dbReference>
<dbReference type="RefSeq" id="NP_567279.3">
    <property type="nucleotide sequence ID" value="NM_116737.4"/>
</dbReference>
<dbReference type="SMR" id="Q1PEB4"/>
<dbReference type="BioGRID" id="11150">
    <property type="interactions" value="1"/>
</dbReference>
<dbReference type="STRING" id="3702.Q1PEB4"/>
<dbReference type="GlyGen" id="Q1PEB4">
    <property type="glycosylation" value="1 site"/>
</dbReference>
<dbReference type="iPTMnet" id="Q1PEB4"/>
<dbReference type="PaxDb" id="3702-AT4G04980.1"/>
<dbReference type="ProteomicsDB" id="242879"/>
<dbReference type="EnsemblPlants" id="AT4G04980.3">
    <property type="protein sequence ID" value="AT4G04980.3"/>
    <property type="gene ID" value="AT4G04980"/>
</dbReference>
<dbReference type="GeneID" id="825839"/>
<dbReference type="Gramene" id="AT4G04980.3">
    <property type="protein sequence ID" value="AT4G04980.3"/>
    <property type="gene ID" value="AT4G04980"/>
</dbReference>
<dbReference type="KEGG" id="ath:AT4G04980"/>
<dbReference type="Araport" id="AT4G04980"/>
<dbReference type="TAIR" id="AT4G04980"/>
<dbReference type="eggNOG" id="ENOG502QTV0">
    <property type="taxonomic scope" value="Eukaryota"/>
</dbReference>
<dbReference type="HOGENOM" id="CLU_021013_0_0_1"/>
<dbReference type="InParanoid" id="Q1PEB4"/>
<dbReference type="OMA" id="QRYNINI"/>
<dbReference type="PhylomeDB" id="Q1PEB4"/>
<dbReference type="PRO" id="PR:Q1PEB4"/>
<dbReference type="Proteomes" id="UP000006548">
    <property type="component" value="Chromosome 4"/>
</dbReference>
<dbReference type="ExpressionAtlas" id="Q1PEB4">
    <property type="expression patterns" value="baseline and differential"/>
</dbReference>
<dbReference type="InterPro" id="IPR040265">
    <property type="entry name" value="CHUP1/IPGA1-like"/>
</dbReference>
<dbReference type="PANTHER" id="PTHR31342:SF32">
    <property type="entry name" value="HYDROXYPROLINE-RICH GLYCOPROTEIN FAMILY PROTEIN"/>
    <property type="match status" value="1"/>
</dbReference>
<dbReference type="PANTHER" id="PTHR31342">
    <property type="entry name" value="PROTEIN CHUP1, CHLOROPLASTIC"/>
    <property type="match status" value="1"/>
</dbReference>